<proteinExistence type="inferred from homology"/>
<comment type="function">
    <text evidence="1">Modulates the synthesis of GlmS, by affecting the processing and stability of the regulatory small RNA GlmZ. When glucosamine-6-phosphate (GlcN6P) concentrations are high in the cell, RapZ binds GlmZ and targets it to cleavage by RNase E. Consequently, GlmZ is inactivated and unable to activate GlmS synthesis. Under low GlcN6P concentrations, RapZ is sequestered and inactivated by an other regulatory small RNA, GlmY, preventing GlmZ degradation and leading to synthesis of GlmS.</text>
</comment>
<comment type="subunit">
    <text evidence="1">Homotrimer.</text>
</comment>
<comment type="similarity">
    <text evidence="1">Belongs to the RapZ-like family. RapZ subfamily.</text>
</comment>
<sequence>MVLMIVSGRSGSGKSVALRALEDMGFYCVDNLPVVLLPDLARTLADREISAAVSIDVRNMPESPEIFEQAMSNLPDAFSPQLLFLDADRNTLIRRYSDTRRLHPLSSKNLSLESAIDKESDLLEPLRSRADLIVDTSEMSVHELAEMLRTRLLGKRERELTMVFESFGFKHGIPIDADYVFDVRFLPNPHWDPKLRPMTGLDKPVAAFLDRHTEVHNFIYQTRSYLELWLPMLETNNRSYLTVAIGCTGGKHRSVYIAEQLADYFRSRGKNVQSRHRTLEKRKP</sequence>
<name>RAPZ_ECO27</name>
<dbReference type="EMBL" id="FM180568">
    <property type="protein sequence ID" value="CAS11032.1"/>
    <property type="molecule type" value="Genomic_DNA"/>
</dbReference>
<dbReference type="RefSeq" id="WP_000243741.1">
    <property type="nucleotide sequence ID" value="NC_011601.1"/>
</dbReference>
<dbReference type="SMR" id="B7UJU5"/>
<dbReference type="GeneID" id="93778776"/>
<dbReference type="KEGG" id="ecg:E2348C_3484"/>
<dbReference type="HOGENOM" id="CLU_059558_1_1_6"/>
<dbReference type="Proteomes" id="UP000008205">
    <property type="component" value="Chromosome"/>
</dbReference>
<dbReference type="GO" id="GO:0005524">
    <property type="term" value="F:ATP binding"/>
    <property type="evidence" value="ECO:0007669"/>
    <property type="project" value="UniProtKB-UniRule"/>
</dbReference>
<dbReference type="GO" id="GO:0005525">
    <property type="term" value="F:GTP binding"/>
    <property type="evidence" value="ECO:0007669"/>
    <property type="project" value="UniProtKB-UniRule"/>
</dbReference>
<dbReference type="GO" id="GO:0003723">
    <property type="term" value="F:RNA binding"/>
    <property type="evidence" value="ECO:0007669"/>
    <property type="project" value="UniProtKB-KW"/>
</dbReference>
<dbReference type="Gene3D" id="3.40.50.300">
    <property type="entry name" value="P-loop containing nucleotide triphosphate hydrolases"/>
    <property type="match status" value="1"/>
</dbReference>
<dbReference type="HAMAP" id="MF_00636">
    <property type="entry name" value="RapZ_like"/>
    <property type="match status" value="1"/>
</dbReference>
<dbReference type="InterPro" id="IPR027417">
    <property type="entry name" value="P-loop_NTPase"/>
</dbReference>
<dbReference type="InterPro" id="IPR005337">
    <property type="entry name" value="RapZ-like"/>
</dbReference>
<dbReference type="InterPro" id="IPR053930">
    <property type="entry name" value="RapZ-like_N"/>
</dbReference>
<dbReference type="InterPro" id="IPR053931">
    <property type="entry name" value="RapZ_C"/>
</dbReference>
<dbReference type="NCBIfam" id="NF003828">
    <property type="entry name" value="PRK05416.1"/>
    <property type="match status" value="1"/>
</dbReference>
<dbReference type="PANTHER" id="PTHR30448">
    <property type="entry name" value="RNASE ADAPTER PROTEIN RAPZ"/>
    <property type="match status" value="1"/>
</dbReference>
<dbReference type="PANTHER" id="PTHR30448:SF0">
    <property type="entry name" value="RNASE ADAPTER PROTEIN RAPZ"/>
    <property type="match status" value="1"/>
</dbReference>
<dbReference type="Pfam" id="PF22740">
    <property type="entry name" value="PapZ_C"/>
    <property type="match status" value="1"/>
</dbReference>
<dbReference type="Pfam" id="PF03668">
    <property type="entry name" value="RapZ-like_N"/>
    <property type="match status" value="1"/>
</dbReference>
<dbReference type="PIRSF" id="PIRSF005052">
    <property type="entry name" value="P-loopkin"/>
    <property type="match status" value="1"/>
</dbReference>
<dbReference type="SUPFAM" id="SSF52540">
    <property type="entry name" value="P-loop containing nucleoside triphosphate hydrolases"/>
    <property type="match status" value="1"/>
</dbReference>
<reference key="1">
    <citation type="journal article" date="2009" name="J. Bacteriol.">
        <title>Complete genome sequence and comparative genome analysis of enteropathogenic Escherichia coli O127:H6 strain E2348/69.</title>
        <authorList>
            <person name="Iguchi A."/>
            <person name="Thomson N.R."/>
            <person name="Ogura Y."/>
            <person name="Saunders D."/>
            <person name="Ooka T."/>
            <person name="Henderson I.R."/>
            <person name="Harris D."/>
            <person name="Asadulghani M."/>
            <person name="Kurokawa K."/>
            <person name="Dean P."/>
            <person name="Kenny B."/>
            <person name="Quail M.A."/>
            <person name="Thurston S."/>
            <person name="Dougan G."/>
            <person name="Hayashi T."/>
            <person name="Parkhill J."/>
            <person name="Frankel G."/>
        </authorList>
    </citation>
    <scope>NUCLEOTIDE SEQUENCE [LARGE SCALE GENOMIC DNA]</scope>
    <source>
        <strain>E2348/69 / EPEC</strain>
    </source>
</reference>
<evidence type="ECO:0000255" key="1">
    <source>
        <dbReference type="HAMAP-Rule" id="MF_00636"/>
    </source>
</evidence>
<gene>
    <name evidence="1" type="primary">rapZ</name>
    <name type="ordered locus">E2348C_3484</name>
</gene>
<feature type="chain" id="PRO_1000147358" description="RNase adapter protein RapZ">
    <location>
        <begin position="1"/>
        <end position="284"/>
    </location>
</feature>
<feature type="region of interest" description="RNA-binding" evidence="1">
    <location>
        <begin position="266"/>
        <end position="284"/>
    </location>
</feature>
<feature type="binding site" evidence="1">
    <location>
        <begin position="8"/>
        <end position="15"/>
    </location>
    <ligand>
        <name>ATP</name>
        <dbReference type="ChEBI" id="CHEBI:30616"/>
    </ligand>
</feature>
<feature type="binding site" evidence="1">
    <location>
        <begin position="56"/>
        <end position="59"/>
    </location>
    <ligand>
        <name>GTP</name>
        <dbReference type="ChEBI" id="CHEBI:37565"/>
    </ligand>
</feature>
<keyword id="KW-0067">ATP-binding</keyword>
<keyword id="KW-0342">GTP-binding</keyword>
<keyword id="KW-0547">Nucleotide-binding</keyword>
<keyword id="KW-1185">Reference proteome</keyword>
<keyword id="KW-0694">RNA-binding</keyword>
<organism>
    <name type="scientific">Escherichia coli O127:H6 (strain E2348/69 / EPEC)</name>
    <dbReference type="NCBI Taxonomy" id="574521"/>
    <lineage>
        <taxon>Bacteria</taxon>
        <taxon>Pseudomonadati</taxon>
        <taxon>Pseudomonadota</taxon>
        <taxon>Gammaproteobacteria</taxon>
        <taxon>Enterobacterales</taxon>
        <taxon>Enterobacteriaceae</taxon>
        <taxon>Escherichia</taxon>
    </lineage>
</organism>
<protein>
    <recommendedName>
        <fullName evidence="1">RNase adapter protein RapZ</fullName>
    </recommendedName>
</protein>
<accession>B7UJU5</accession>